<accession>P38143</accession>
<accession>D6VQP0</accession>
<comment type="function">
    <text evidence="1 2 5 6">Glutathione peroxidase-like protein that protects cells from phospholipid hydroperoxides and nonphospholipid peroxides during oxidative stress (PubMed:10480913, PubMed:11445588). Plays an important role in the oxidative stress-induced response in the presence of Ca(2+). Has peroxidase activity using preferentially thioredoxin as a reducing power. The redox state of the mitochondrial GPX2 is regulated by TRX1 and TRX2 (cytoplasmic thioredoxin), and by TRX3 (mitochondrial matrix thioredoxin) (PubMed:16251189). Involved in sporulation (PubMed:21763276).</text>
</comment>
<comment type="catalytic activity">
    <reaction evidence="5">
        <text>a hydroperoxide + [thioredoxin]-dithiol = an alcohol + [thioredoxin]-disulfide + H2O</text>
        <dbReference type="Rhea" id="RHEA:62620"/>
        <dbReference type="Rhea" id="RHEA-COMP:10698"/>
        <dbReference type="Rhea" id="RHEA-COMP:10700"/>
        <dbReference type="ChEBI" id="CHEBI:15377"/>
        <dbReference type="ChEBI" id="CHEBI:29950"/>
        <dbReference type="ChEBI" id="CHEBI:30879"/>
        <dbReference type="ChEBI" id="CHEBI:35924"/>
        <dbReference type="ChEBI" id="CHEBI:50058"/>
        <dbReference type="EC" id="1.11.1.24"/>
    </reaction>
</comment>
<comment type="biophysicochemical properties">
    <kinetics>
        <KM evidence="5">170 uM for H(2)O(2) (using glutathione as electron donor)</KM>
        <KM evidence="5">313 uM for tert-butyl hydroperoxide (using glutathione as electron donor)</KM>
        <KM evidence="5">20 uM for H(2)O(2) (using thioredoxin as electron donor)</KM>
        <KM evidence="5">62.5 uM for tert-butyl hydroperoxide (using glutathione as electron donor)</KM>
        <Vmax evidence="5">0.27 umol/min/mg enzyme for H(2)O(2) (using glutathione as electron donor)</Vmax>
        <Vmax evidence="5">0.295 umol/min/mg enzyme for tert-butyl hydroperoxide (using glutathione as electron donor)</Vmax>
        <Vmax evidence="5">2.6 umol/min/mg enzyme for H(2)O(2) (using thioredoxin as electron donor)</Vmax>
        <Vmax evidence="5">1.0 umol/min/mg enzyme for tert-butyl hydroperoxide (using thioredoxin as electron donor)</Vmax>
    </kinetics>
</comment>
<comment type="subunit">
    <text evidence="5">Monomer.</text>
</comment>
<comment type="subcellular location">
    <subcellularLocation>
        <location evidence="3 6">Cytoplasm</location>
    </subcellularLocation>
    <subcellularLocation>
        <location evidence="3">Nucleus</location>
    </subcellularLocation>
    <subcellularLocation>
        <location>Mitochondrion outer membrane</location>
        <topology>Peripheral membrane protein</topology>
        <orientation evidence="6">Cytoplasmic side</orientation>
    </subcellularLocation>
    <subcellularLocation>
        <location>Mitochondrion inner membrane</location>
        <topology>Peripheral membrane protein</topology>
        <orientation evidence="6">Matrix side</orientation>
    </subcellularLocation>
</comment>
<comment type="induction">
    <text evidence="1 6">By oxidative stress, dependent on transcription factor YAP1 (PubMed:10480913). By oleic acid (PubMed:21763276).</text>
</comment>
<comment type="miscellaneous">
    <text evidence="4">Present with 2010 molecules/cell in log phase SD medium.</text>
</comment>
<comment type="miscellaneous">
    <text evidence="11">The active site is a conserved redox-active cysteine residue, the peroxidatic cysteine (C(P)), which makes the nucleophilic attack on the peroxide substrate. The peroxide oxidizes the C(P)-SH to cysteine sulfenic acid (C(P)-SOH), which then reacts with another cysteine residue, the resolving cysteine (C(R)), to form a disulfide bridge. The disulfide is subsequently reduced by an appropriate electron donor to complete the catalytic cycle. In this atypical 2-Cys peroxiredoxin, C(R) is present in the same subunit to form an intramolecular disulfide.</text>
</comment>
<comment type="similarity">
    <text evidence="8">Belongs to the glutathione peroxidase family.</text>
</comment>
<comment type="caution">
    <text evidence="9 10 11">Was originally thought to be a glutathione peroxidase (PubMed:10480913) or a phospholipid hydroperoxide glutathione peroxidase (PubMed:11445588), but functions as an atypical 2-Cys peroxiredoxin using thioredoxin as reducing power instead (PubMed:16251189).</text>
</comment>
<keyword id="KW-0049">Antioxidant</keyword>
<keyword id="KW-0963">Cytoplasm</keyword>
<keyword id="KW-1015">Disulfide bond</keyword>
<keyword id="KW-0472">Membrane</keyword>
<keyword id="KW-0496">Mitochondrion</keyword>
<keyword id="KW-0999">Mitochondrion inner membrane</keyword>
<keyword id="KW-1000">Mitochondrion outer membrane</keyword>
<keyword id="KW-0539">Nucleus</keyword>
<keyword id="KW-0560">Oxidoreductase</keyword>
<keyword id="KW-0575">Peroxidase</keyword>
<keyword id="KW-0676">Redox-active center</keyword>
<keyword id="KW-1185">Reference proteome</keyword>
<dbReference type="EC" id="1.11.1.24" evidence="5"/>
<dbReference type="EMBL" id="Z36113">
    <property type="protein sequence ID" value="CAA85207.1"/>
    <property type="molecule type" value="Genomic_DNA"/>
</dbReference>
<dbReference type="EMBL" id="AY557641">
    <property type="protein sequence ID" value="AAS55967.1"/>
    <property type="molecule type" value="Genomic_DNA"/>
</dbReference>
<dbReference type="EMBL" id="BK006936">
    <property type="protein sequence ID" value="DAA07360.1"/>
    <property type="molecule type" value="Genomic_DNA"/>
</dbReference>
<dbReference type="PIR" id="S46121">
    <property type="entry name" value="S46121"/>
</dbReference>
<dbReference type="RefSeq" id="NP_009803.3">
    <property type="nucleotide sequence ID" value="NM_001178592.3"/>
</dbReference>
<dbReference type="SMR" id="P38143"/>
<dbReference type="BioGRID" id="32939">
    <property type="interactions" value="78"/>
</dbReference>
<dbReference type="DIP" id="DIP-8180N"/>
<dbReference type="FunCoup" id="P38143">
    <property type="interactions" value="600"/>
</dbReference>
<dbReference type="IntAct" id="P38143">
    <property type="interactions" value="12"/>
</dbReference>
<dbReference type="MINT" id="P38143"/>
<dbReference type="STRING" id="4932.YBR244W"/>
<dbReference type="PeroxiBase" id="3741">
    <property type="entry name" value="SceGPx02"/>
</dbReference>
<dbReference type="iPTMnet" id="P38143"/>
<dbReference type="PaxDb" id="4932-YBR244W"/>
<dbReference type="PeptideAtlas" id="P38143"/>
<dbReference type="EnsemblFungi" id="YBR244W_mRNA">
    <property type="protein sequence ID" value="YBR244W"/>
    <property type="gene ID" value="YBR244W"/>
</dbReference>
<dbReference type="GeneID" id="852546"/>
<dbReference type="KEGG" id="sce:YBR244W"/>
<dbReference type="AGR" id="SGD:S000000448"/>
<dbReference type="SGD" id="S000000448">
    <property type="gene designation" value="GPX2"/>
</dbReference>
<dbReference type="VEuPathDB" id="FungiDB:YBR244W"/>
<dbReference type="eggNOG" id="KOG1651">
    <property type="taxonomic scope" value="Eukaryota"/>
</dbReference>
<dbReference type="GeneTree" id="ENSGT00940000165680"/>
<dbReference type="HOGENOM" id="CLU_029507_2_2_1"/>
<dbReference type="InParanoid" id="P38143"/>
<dbReference type="OMA" id="QCGLTKQ"/>
<dbReference type="OrthoDB" id="446890at2759"/>
<dbReference type="BioCyc" id="YEAST:YBR244W-MONOMER"/>
<dbReference type="BioGRID-ORCS" id="852546">
    <property type="hits" value="0 hits in 10 CRISPR screens"/>
</dbReference>
<dbReference type="PRO" id="PR:P38143"/>
<dbReference type="Proteomes" id="UP000002311">
    <property type="component" value="Chromosome II"/>
</dbReference>
<dbReference type="RNAct" id="P38143">
    <property type="molecule type" value="protein"/>
</dbReference>
<dbReference type="GO" id="GO:0005737">
    <property type="term" value="C:cytoplasm"/>
    <property type="evidence" value="ECO:0000314"/>
    <property type="project" value="SGD"/>
</dbReference>
<dbReference type="GO" id="GO:0005743">
    <property type="term" value="C:mitochondrial inner membrane"/>
    <property type="evidence" value="ECO:0007669"/>
    <property type="project" value="UniProtKB-SubCell"/>
</dbReference>
<dbReference type="GO" id="GO:0005741">
    <property type="term" value="C:mitochondrial outer membrane"/>
    <property type="evidence" value="ECO:0007669"/>
    <property type="project" value="UniProtKB-SubCell"/>
</dbReference>
<dbReference type="GO" id="GO:0005634">
    <property type="term" value="C:nucleus"/>
    <property type="evidence" value="ECO:0007005"/>
    <property type="project" value="SGD"/>
</dbReference>
<dbReference type="GO" id="GO:0004602">
    <property type="term" value="F:glutathione peroxidase activity"/>
    <property type="evidence" value="ECO:0000314"/>
    <property type="project" value="SGD"/>
</dbReference>
<dbReference type="GO" id="GO:0047066">
    <property type="term" value="F:phospholipid-hydroperoxide glutathione peroxidase activity"/>
    <property type="evidence" value="ECO:0000314"/>
    <property type="project" value="SGD"/>
</dbReference>
<dbReference type="GO" id="GO:0140824">
    <property type="term" value="F:thioredoxin-dependent peroxiredoxin activity"/>
    <property type="evidence" value="ECO:0007669"/>
    <property type="project" value="UniProtKB-EC"/>
</dbReference>
<dbReference type="GO" id="GO:0034599">
    <property type="term" value="P:cellular response to oxidative stress"/>
    <property type="evidence" value="ECO:0000315"/>
    <property type="project" value="SGD"/>
</dbReference>
<dbReference type="CDD" id="cd00340">
    <property type="entry name" value="GSH_Peroxidase"/>
    <property type="match status" value="1"/>
</dbReference>
<dbReference type="FunFam" id="3.40.30.10:FF:000010">
    <property type="entry name" value="Glutathione peroxidase"/>
    <property type="match status" value="1"/>
</dbReference>
<dbReference type="Gene3D" id="3.40.30.10">
    <property type="entry name" value="Glutaredoxin"/>
    <property type="match status" value="1"/>
</dbReference>
<dbReference type="InterPro" id="IPR000889">
    <property type="entry name" value="Glutathione_peroxidase"/>
</dbReference>
<dbReference type="InterPro" id="IPR029759">
    <property type="entry name" value="GPX_AS"/>
</dbReference>
<dbReference type="InterPro" id="IPR029760">
    <property type="entry name" value="GPX_CS"/>
</dbReference>
<dbReference type="InterPro" id="IPR036249">
    <property type="entry name" value="Thioredoxin-like_sf"/>
</dbReference>
<dbReference type="PANTHER" id="PTHR11592">
    <property type="entry name" value="GLUTATHIONE PEROXIDASE"/>
    <property type="match status" value="1"/>
</dbReference>
<dbReference type="PANTHER" id="PTHR11592:SF78">
    <property type="entry name" value="GLUTATHIONE PEROXIDASE"/>
    <property type="match status" value="1"/>
</dbReference>
<dbReference type="Pfam" id="PF00255">
    <property type="entry name" value="GSHPx"/>
    <property type="match status" value="1"/>
</dbReference>
<dbReference type="PIRSF" id="PIRSF000303">
    <property type="entry name" value="Glutathion_perox"/>
    <property type="match status" value="1"/>
</dbReference>
<dbReference type="PRINTS" id="PR01011">
    <property type="entry name" value="GLUTPROXDASE"/>
</dbReference>
<dbReference type="SUPFAM" id="SSF52833">
    <property type="entry name" value="Thioredoxin-like"/>
    <property type="match status" value="1"/>
</dbReference>
<dbReference type="PROSITE" id="PS00460">
    <property type="entry name" value="GLUTATHIONE_PEROXID_1"/>
    <property type="match status" value="1"/>
</dbReference>
<dbReference type="PROSITE" id="PS00763">
    <property type="entry name" value="GLUTATHIONE_PEROXID_2"/>
    <property type="match status" value="1"/>
</dbReference>
<dbReference type="PROSITE" id="PS51355">
    <property type="entry name" value="GLUTATHIONE_PEROXID_3"/>
    <property type="match status" value="1"/>
</dbReference>
<proteinExistence type="evidence at protein level"/>
<protein>
    <recommendedName>
        <fullName evidence="7">Glutathione peroxidase-like peroxiredoxin 2</fullName>
        <ecNumber evidence="5">1.11.1.24</ecNumber>
    </recommendedName>
    <alternativeName>
        <fullName evidence="7">Glutathione peroxidase homolog 2</fullName>
        <shortName>GPx 2</shortName>
    </alternativeName>
</protein>
<evidence type="ECO:0000269" key="1">
    <source>
    </source>
</evidence>
<evidence type="ECO:0000269" key="2">
    <source>
    </source>
</evidence>
<evidence type="ECO:0000269" key="3">
    <source>
    </source>
</evidence>
<evidence type="ECO:0000269" key="4">
    <source>
    </source>
</evidence>
<evidence type="ECO:0000269" key="5">
    <source>
    </source>
</evidence>
<evidence type="ECO:0000269" key="6">
    <source>
    </source>
</evidence>
<evidence type="ECO:0000303" key="7">
    <source>
    </source>
</evidence>
<evidence type="ECO:0000305" key="8"/>
<evidence type="ECO:0000305" key="9">
    <source>
    </source>
</evidence>
<evidence type="ECO:0000305" key="10">
    <source>
    </source>
</evidence>
<evidence type="ECO:0000305" key="11">
    <source>
    </source>
</evidence>
<evidence type="ECO:0000312" key="12">
    <source>
        <dbReference type="SGD" id="S000000448"/>
    </source>
</evidence>
<feature type="chain" id="PRO_0000066642" description="Glutathione peroxidase-like peroxiredoxin 2">
    <location>
        <begin position="1"/>
        <end position="162"/>
    </location>
</feature>
<feature type="active site" description="Cysteine sulfenic acid (-SOH) intermediate" evidence="11">
    <location>
        <position position="37"/>
    </location>
</feature>
<feature type="disulfide bond" description="Redox-active" evidence="11">
    <location>
        <begin position="37"/>
        <end position="83"/>
    </location>
</feature>
<feature type="mutagenesis site" description="Prevents oxidation of the protein." evidence="5">
    <original>C</original>
    <variation>A</variation>
    <location>
        <position position="37"/>
    </location>
</feature>
<feature type="mutagenesis site" description="Prevents oxidation of the protein." evidence="5">
    <original>C</original>
    <variation>A</variation>
    <location>
        <position position="83"/>
    </location>
</feature>
<gene>
    <name evidence="7" type="primary">GPX2</name>
    <name evidence="12" type="ordered locus">YBR244W</name>
    <name type="ORF">YBR1632</name>
</gene>
<name>GPX2_YEAST</name>
<sequence>MTTSFYDLECKDKKGESFKFDQLKGKVVLIVNVASKCGFTPQYKELEELYKKYQDKGFVILGFPCNQFGKQEPGSDEQITEFCQLNYGVTFPIMKKIDVNGSNADSVYNYLKSQKAGLLGFKGIKWNFEKFLVDSNGKVVQRFSSLTKPSSLDQEIQSLLSK</sequence>
<reference key="1">
    <citation type="journal article" date="1994" name="EMBO J.">
        <title>Complete DNA sequence of yeast chromosome II.</title>
        <authorList>
            <person name="Feldmann H."/>
            <person name="Aigle M."/>
            <person name="Aljinovic G."/>
            <person name="Andre B."/>
            <person name="Baclet M.C."/>
            <person name="Barthe C."/>
            <person name="Baur A."/>
            <person name="Becam A.-M."/>
            <person name="Biteau N."/>
            <person name="Boles E."/>
            <person name="Brandt T."/>
            <person name="Brendel M."/>
            <person name="Brueckner M."/>
            <person name="Bussereau F."/>
            <person name="Christiansen C."/>
            <person name="Contreras R."/>
            <person name="Crouzet M."/>
            <person name="Cziepluch C."/>
            <person name="Demolis N."/>
            <person name="Delaveau T."/>
            <person name="Doignon F."/>
            <person name="Domdey H."/>
            <person name="Duesterhus S."/>
            <person name="Dubois E."/>
            <person name="Dujon B."/>
            <person name="El Bakkoury M."/>
            <person name="Entian K.-D."/>
            <person name="Feuermann M."/>
            <person name="Fiers W."/>
            <person name="Fobo G.M."/>
            <person name="Fritz C."/>
            <person name="Gassenhuber J."/>
            <person name="Glansdorff N."/>
            <person name="Goffeau A."/>
            <person name="Grivell L.A."/>
            <person name="de Haan M."/>
            <person name="Hein C."/>
            <person name="Herbert C.J."/>
            <person name="Hollenberg C.P."/>
            <person name="Holmstroem K."/>
            <person name="Jacq C."/>
            <person name="Jacquet M."/>
            <person name="Jauniaux J.-C."/>
            <person name="Jonniaux J.-L."/>
            <person name="Kallesoee T."/>
            <person name="Kiesau P."/>
            <person name="Kirchrath L."/>
            <person name="Koetter P."/>
            <person name="Korol S."/>
            <person name="Liebl S."/>
            <person name="Logghe M."/>
            <person name="Lohan A.J.E."/>
            <person name="Louis E.J."/>
            <person name="Li Z.Y."/>
            <person name="Maat M.J."/>
            <person name="Mallet L."/>
            <person name="Mannhaupt G."/>
            <person name="Messenguy F."/>
            <person name="Miosga T."/>
            <person name="Molemans F."/>
            <person name="Mueller S."/>
            <person name="Nasr F."/>
            <person name="Obermaier B."/>
            <person name="Perea J."/>
            <person name="Pierard A."/>
            <person name="Piravandi E."/>
            <person name="Pohl F.M."/>
            <person name="Pohl T.M."/>
            <person name="Potier S."/>
            <person name="Proft M."/>
            <person name="Purnelle B."/>
            <person name="Ramezani Rad M."/>
            <person name="Rieger M."/>
            <person name="Rose M."/>
            <person name="Schaaff-Gerstenschlaeger I."/>
            <person name="Scherens B."/>
            <person name="Schwarzlose C."/>
            <person name="Skala J."/>
            <person name="Slonimski P.P."/>
            <person name="Smits P.H.M."/>
            <person name="Souciet J.-L."/>
            <person name="Steensma H.Y."/>
            <person name="Stucka R."/>
            <person name="Urrestarazu L.A."/>
            <person name="van der Aart Q.J.M."/>
            <person name="Van Dyck L."/>
            <person name="Vassarotti A."/>
            <person name="Vetter I."/>
            <person name="Vierendeels F."/>
            <person name="Vissers S."/>
            <person name="Wagner G."/>
            <person name="de Wergifosse P."/>
            <person name="Wolfe K.H."/>
            <person name="Zagulski M."/>
            <person name="Zimmermann F.K."/>
            <person name="Mewes H.-W."/>
            <person name="Kleine K."/>
        </authorList>
    </citation>
    <scope>NUCLEOTIDE SEQUENCE [LARGE SCALE GENOMIC DNA]</scope>
    <source>
        <strain>ATCC 204508 / S288c</strain>
    </source>
</reference>
<reference key="2">
    <citation type="journal article" date="2014" name="G3 (Bethesda)">
        <title>The reference genome sequence of Saccharomyces cerevisiae: Then and now.</title>
        <authorList>
            <person name="Engel S.R."/>
            <person name="Dietrich F.S."/>
            <person name="Fisk D.G."/>
            <person name="Binkley G."/>
            <person name="Balakrishnan R."/>
            <person name="Costanzo M.C."/>
            <person name="Dwight S.S."/>
            <person name="Hitz B.C."/>
            <person name="Karra K."/>
            <person name="Nash R.S."/>
            <person name="Weng S."/>
            <person name="Wong E.D."/>
            <person name="Lloyd P."/>
            <person name="Skrzypek M.S."/>
            <person name="Miyasato S.R."/>
            <person name="Simison M."/>
            <person name="Cherry J.M."/>
        </authorList>
    </citation>
    <scope>GENOME REANNOTATION</scope>
    <source>
        <strain>ATCC 204508 / S288c</strain>
    </source>
</reference>
<reference key="3">
    <citation type="journal article" date="2007" name="Genome Res.">
        <title>Approaching a complete repository of sequence-verified protein-encoding clones for Saccharomyces cerevisiae.</title>
        <authorList>
            <person name="Hu Y."/>
            <person name="Rolfs A."/>
            <person name="Bhullar B."/>
            <person name="Murthy T.V.S."/>
            <person name="Zhu C."/>
            <person name="Berger M.F."/>
            <person name="Camargo A.A."/>
            <person name="Kelley F."/>
            <person name="McCarron S."/>
            <person name="Jepson D."/>
            <person name="Richardson A."/>
            <person name="Raphael J."/>
            <person name="Moreira D."/>
            <person name="Taycher E."/>
            <person name="Zuo D."/>
            <person name="Mohr S."/>
            <person name="Kane M.F."/>
            <person name="Williamson J."/>
            <person name="Simpson A.J.G."/>
            <person name="Bulyk M.L."/>
            <person name="Harlow E."/>
            <person name="Marsischky G."/>
            <person name="Kolodner R.D."/>
            <person name="LaBaer J."/>
        </authorList>
    </citation>
    <scope>NUCLEOTIDE SEQUENCE [GENOMIC DNA]</scope>
    <source>
        <strain>ATCC 204508 / S288c</strain>
    </source>
</reference>
<reference key="4">
    <citation type="journal article" date="1999" name="J. Biol. Chem.">
        <title>Genetic analysis of glutathione peroxidase in oxidative stress response of Saccharomyces cerevisiae.</title>
        <authorList>
            <person name="Inoue Y."/>
            <person name="Matsuda T."/>
            <person name="Sugiyama K."/>
            <person name="Izawa S."/>
            <person name="Kimura A."/>
        </authorList>
    </citation>
    <scope>FUNCTION</scope>
    <scope>INDUCTION</scope>
</reference>
<reference key="5">
    <citation type="journal article" date="2001" name="J. Biol. Chem.">
        <title>Saccharomyces cerevisiae expresses three phospholipid hydroperoxide glutathione peroxidases.</title>
        <authorList>
            <person name="Avery A.M."/>
            <person name="Avery S.V."/>
        </authorList>
    </citation>
    <scope>FUNCTION</scope>
</reference>
<reference key="6">
    <citation type="journal article" date="2003" name="Nature">
        <title>Global analysis of protein localization in budding yeast.</title>
        <authorList>
            <person name="Huh W.-K."/>
            <person name="Falvo J.V."/>
            <person name="Gerke L.C."/>
            <person name="Carroll A.S."/>
            <person name="Howson R.W."/>
            <person name="Weissman J.S."/>
            <person name="O'Shea E.K."/>
        </authorList>
    </citation>
    <scope>SUBCELLULAR LOCATION [LARGE SCALE ANALYSIS]</scope>
</reference>
<reference key="7">
    <citation type="journal article" date="2003" name="Nature">
        <title>Global analysis of protein expression in yeast.</title>
        <authorList>
            <person name="Ghaemmaghami S."/>
            <person name="Huh W.-K."/>
            <person name="Bower K."/>
            <person name="Howson R.W."/>
            <person name="Belle A."/>
            <person name="Dephoure N."/>
            <person name="O'Shea E.K."/>
            <person name="Weissman J.S."/>
        </authorList>
    </citation>
    <scope>LEVEL OF PROTEIN EXPRESSION [LARGE SCALE ANALYSIS]</scope>
</reference>
<reference key="8">
    <citation type="journal article" date="2005" name="J. Biol. Chem.">
        <title>GPX2, encoding a phospholipid hydroperoxide glutathione peroxidase homologue, codes for an atypical 2-Cys peroxiredoxin in Saccharomyces cerevisiae.</title>
        <authorList>
            <person name="Tanaka T."/>
            <person name="Izawa S."/>
            <person name="Inoue Y."/>
        </authorList>
    </citation>
    <scope>FUNCTION</scope>
    <scope>CATALYTIC ACTIVITY</scope>
    <scope>BIOPHYSICOCHEMICAL PROPERTIES</scope>
    <scope>SUBUNIT</scope>
    <scope>MUTAGENESIS OF CYS-37 AND CYS-83</scope>
</reference>
<reference key="9">
    <citation type="journal article" date="2008" name="Mol. Cell. Proteomics">
        <title>A multidimensional chromatography technology for in-depth phosphoproteome analysis.</title>
        <authorList>
            <person name="Albuquerque C.P."/>
            <person name="Smolka M.B."/>
            <person name="Payne S.H."/>
            <person name="Bafna V."/>
            <person name="Eng J."/>
            <person name="Zhou H."/>
        </authorList>
    </citation>
    <scope>IDENTIFICATION BY MASS SPECTROMETRY [LARGE SCALE ANALYSIS]</scope>
</reference>
<reference key="10">
    <citation type="journal article" date="2011" name="Biochem. Biophys. Res. Commun.">
        <title>Glutathione peroxidase 2 in Saccharomyces cerevisiae is distributed in mitochondria and involved in sporulation.</title>
        <authorList>
            <person name="Ukai Y."/>
            <person name="Kishimoto T."/>
            <person name="Ohdate T."/>
            <person name="Izawa S."/>
            <person name="Inoue Y."/>
        </authorList>
    </citation>
    <scope>SUBCELLULAR LOCATION</scope>
    <scope>INDUCTION</scope>
</reference>
<organism>
    <name type="scientific">Saccharomyces cerevisiae (strain ATCC 204508 / S288c)</name>
    <name type="common">Baker's yeast</name>
    <dbReference type="NCBI Taxonomy" id="559292"/>
    <lineage>
        <taxon>Eukaryota</taxon>
        <taxon>Fungi</taxon>
        <taxon>Dikarya</taxon>
        <taxon>Ascomycota</taxon>
        <taxon>Saccharomycotina</taxon>
        <taxon>Saccharomycetes</taxon>
        <taxon>Saccharomycetales</taxon>
        <taxon>Saccharomycetaceae</taxon>
        <taxon>Saccharomyces</taxon>
    </lineage>
</organism>